<feature type="chain" id="PRO_1000002392" description="Holliday junction branch migration complex subunit RuvA">
    <location>
        <begin position="1"/>
        <end position="191"/>
    </location>
</feature>
<feature type="region of interest" description="Domain I" evidence="1">
    <location>
        <begin position="1"/>
        <end position="64"/>
    </location>
</feature>
<feature type="region of interest" description="Domain II" evidence="1">
    <location>
        <begin position="65"/>
        <end position="145"/>
    </location>
</feature>
<feature type="region of interest" description="Flexible linker" evidence="1">
    <location>
        <begin position="146"/>
        <end position="149"/>
    </location>
</feature>
<feature type="region of interest" description="Domain III" evidence="1">
    <location>
        <begin position="149"/>
        <end position="191"/>
    </location>
</feature>
<accession>Q2GLG0</accession>
<organism>
    <name type="scientific">Anaplasma phagocytophilum (strain HZ)</name>
    <dbReference type="NCBI Taxonomy" id="212042"/>
    <lineage>
        <taxon>Bacteria</taxon>
        <taxon>Pseudomonadati</taxon>
        <taxon>Pseudomonadota</taxon>
        <taxon>Alphaproteobacteria</taxon>
        <taxon>Rickettsiales</taxon>
        <taxon>Anaplasmataceae</taxon>
        <taxon>Anaplasma</taxon>
        <taxon>phagocytophilum group</taxon>
    </lineage>
</organism>
<keyword id="KW-0963">Cytoplasm</keyword>
<keyword id="KW-0227">DNA damage</keyword>
<keyword id="KW-0233">DNA recombination</keyword>
<keyword id="KW-0234">DNA repair</keyword>
<keyword id="KW-0238">DNA-binding</keyword>
<evidence type="ECO:0000255" key="1">
    <source>
        <dbReference type="HAMAP-Rule" id="MF_00031"/>
    </source>
</evidence>
<proteinExistence type="inferred from homology"/>
<gene>
    <name evidence="1" type="primary">ruvA</name>
    <name type="ordered locus">APH_0167</name>
</gene>
<name>RUVA_ANAPZ</name>
<dbReference type="EMBL" id="CP000235">
    <property type="protein sequence ID" value="ABD43904.1"/>
    <property type="molecule type" value="Genomic_DNA"/>
</dbReference>
<dbReference type="RefSeq" id="WP_011450315.1">
    <property type="nucleotide sequence ID" value="NC_007797.1"/>
</dbReference>
<dbReference type="SMR" id="Q2GLG0"/>
<dbReference type="STRING" id="212042.APH_0167"/>
<dbReference type="PaxDb" id="212042-APH_0167"/>
<dbReference type="EnsemblBacteria" id="ABD43904">
    <property type="protein sequence ID" value="ABD43904"/>
    <property type="gene ID" value="APH_0167"/>
</dbReference>
<dbReference type="GeneID" id="92747603"/>
<dbReference type="KEGG" id="aph:APH_0167"/>
<dbReference type="eggNOG" id="COG0632">
    <property type="taxonomic scope" value="Bacteria"/>
</dbReference>
<dbReference type="HOGENOM" id="CLU_087936_3_0_5"/>
<dbReference type="Proteomes" id="UP000001943">
    <property type="component" value="Chromosome"/>
</dbReference>
<dbReference type="GO" id="GO:0005737">
    <property type="term" value="C:cytoplasm"/>
    <property type="evidence" value="ECO:0007669"/>
    <property type="project" value="UniProtKB-SubCell"/>
</dbReference>
<dbReference type="GO" id="GO:0009379">
    <property type="term" value="C:Holliday junction helicase complex"/>
    <property type="evidence" value="ECO:0007669"/>
    <property type="project" value="InterPro"/>
</dbReference>
<dbReference type="GO" id="GO:0048476">
    <property type="term" value="C:Holliday junction resolvase complex"/>
    <property type="evidence" value="ECO:0007669"/>
    <property type="project" value="UniProtKB-UniRule"/>
</dbReference>
<dbReference type="GO" id="GO:0005524">
    <property type="term" value="F:ATP binding"/>
    <property type="evidence" value="ECO:0007669"/>
    <property type="project" value="InterPro"/>
</dbReference>
<dbReference type="GO" id="GO:0000400">
    <property type="term" value="F:four-way junction DNA binding"/>
    <property type="evidence" value="ECO:0007669"/>
    <property type="project" value="UniProtKB-UniRule"/>
</dbReference>
<dbReference type="GO" id="GO:0009378">
    <property type="term" value="F:four-way junction helicase activity"/>
    <property type="evidence" value="ECO:0007669"/>
    <property type="project" value="InterPro"/>
</dbReference>
<dbReference type="GO" id="GO:0006310">
    <property type="term" value="P:DNA recombination"/>
    <property type="evidence" value="ECO:0007669"/>
    <property type="project" value="UniProtKB-UniRule"/>
</dbReference>
<dbReference type="GO" id="GO:0006281">
    <property type="term" value="P:DNA repair"/>
    <property type="evidence" value="ECO:0007669"/>
    <property type="project" value="UniProtKB-UniRule"/>
</dbReference>
<dbReference type="CDD" id="cd14332">
    <property type="entry name" value="UBA_RuvA_C"/>
    <property type="match status" value="1"/>
</dbReference>
<dbReference type="Gene3D" id="1.10.150.20">
    <property type="entry name" value="5' to 3' exonuclease, C-terminal subdomain"/>
    <property type="match status" value="1"/>
</dbReference>
<dbReference type="Gene3D" id="2.40.50.140">
    <property type="entry name" value="Nucleic acid-binding proteins"/>
    <property type="match status" value="1"/>
</dbReference>
<dbReference type="HAMAP" id="MF_00031">
    <property type="entry name" value="DNA_HJ_migration_RuvA"/>
    <property type="match status" value="1"/>
</dbReference>
<dbReference type="InterPro" id="IPR013849">
    <property type="entry name" value="DNA_helicase_Holl-junc_RuvA_I"/>
</dbReference>
<dbReference type="InterPro" id="IPR012340">
    <property type="entry name" value="NA-bd_OB-fold"/>
</dbReference>
<dbReference type="InterPro" id="IPR000085">
    <property type="entry name" value="RuvA"/>
</dbReference>
<dbReference type="InterPro" id="IPR010994">
    <property type="entry name" value="RuvA_2-like"/>
</dbReference>
<dbReference type="InterPro" id="IPR011114">
    <property type="entry name" value="RuvA_C"/>
</dbReference>
<dbReference type="InterPro" id="IPR036267">
    <property type="entry name" value="RuvA_C_sf"/>
</dbReference>
<dbReference type="NCBIfam" id="NF011194">
    <property type="entry name" value="PRK14600.1"/>
    <property type="match status" value="1"/>
</dbReference>
<dbReference type="NCBIfam" id="TIGR00084">
    <property type="entry name" value="ruvA"/>
    <property type="match status" value="1"/>
</dbReference>
<dbReference type="Pfam" id="PF14520">
    <property type="entry name" value="HHH_5"/>
    <property type="match status" value="1"/>
</dbReference>
<dbReference type="Pfam" id="PF07499">
    <property type="entry name" value="RuvA_C"/>
    <property type="match status" value="1"/>
</dbReference>
<dbReference type="Pfam" id="PF01330">
    <property type="entry name" value="RuvA_N"/>
    <property type="match status" value="1"/>
</dbReference>
<dbReference type="SUPFAM" id="SSF46929">
    <property type="entry name" value="DNA helicase RuvA subunit, C-terminal domain"/>
    <property type="match status" value="1"/>
</dbReference>
<dbReference type="SUPFAM" id="SSF50249">
    <property type="entry name" value="Nucleic acid-binding proteins"/>
    <property type="match status" value="1"/>
</dbReference>
<dbReference type="SUPFAM" id="SSF47781">
    <property type="entry name" value="RuvA domain 2-like"/>
    <property type="match status" value="1"/>
</dbReference>
<comment type="function">
    <text evidence="1">The RuvA-RuvB-RuvC complex processes Holliday junction (HJ) DNA during genetic recombination and DNA repair, while the RuvA-RuvB complex plays an important role in the rescue of blocked DNA replication forks via replication fork reversal (RFR). RuvA specifically binds to HJ cruciform DNA, conferring on it an open structure. The RuvB hexamer acts as an ATP-dependent pump, pulling dsDNA into and through the RuvAB complex. HJ branch migration allows RuvC to scan DNA until it finds its consensus sequence, where it cleaves and resolves the cruciform DNA.</text>
</comment>
<comment type="subunit">
    <text evidence="1">Homotetramer. Forms an RuvA(8)-RuvB(12)-Holliday junction (HJ) complex. HJ DNA is sandwiched between 2 RuvA tetramers; dsDNA enters through RuvA and exits via RuvB. An RuvB hexamer assembles on each DNA strand where it exits the tetramer. Each RuvB hexamer is contacted by two RuvA subunits (via domain III) on 2 adjacent RuvB subunits; this complex drives branch migration. In the full resolvosome a probable DNA-RuvA(4)-RuvB(12)-RuvC(2) complex forms which resolves the HJ.</text>
</comment>
<comment type="subcellular location">
    <subcellularLocation>
        <location evidence="1">Cytoplasm</location>
    </subcellularLocation>
</comment>
<comment type="domain">
    <text evidence="1">Has three domains with a flexible linker between the domains II and III and assumes an 'L' shape. Domain III is highly mobile and contacts RuvB.</text>
</comment>
<comment type="similarity">
    <text evidence="1">Belongs to the RuvA family.</text>
</comment>
<protein>
    <recommendedName>
        <fullName evidence="1">Holliday junction branch migration complex subunit RuvA</fullName>
    </recommendedName>
</protein>
<sequence>MIGTLSGIIEEVQDTSIILAVGGVGYIVHVSYRTLINCKRGDSIKLYIETYVNRDNVPQLYGFTDTEEQNCLKMLIKVSGINYRTALAILDRLTPDQLFSAIVNEDKAALKVGGVGAKLINRIFTELTPLVQKLEFNIMDKRGPSVEDSDALSALLSLGYEKTRVLNALEKVGVSHNLSDTVRFALKELSK</sequence>
<reference key="1">
    <citation type="journal article" date="2006" name="PLoS Genet.">
        <title>Comparative genomics of emerging human ehrlichiosis agents.</title>
        <authorList>
            <person name="Dunning Hotopp J.C."/>
            <person name="Lin M."/>
            <person name="Madupu R."/>
            <person name="Crabtree J."/>
            <person name="Angiuoli S.V."/>
            <person name="Eisen J.A."/>
            <person name="Seshadri R."/>
            <person name="Ren Q."/>
            <person name="Wu M."/>
            <person name="Utterback T.R."/>
            <person name="Smith S."/>
            <person name="Lewis M."/>
            <person name="Khouri H."/>
            <person name="Zhang C."/>
            <person name="Niu H."/>
            <person name="Lin Q."/>
            <person name="Ohashi N."/>
            <person name="Zhi N."/>
            <person name="Nelson W.C."/>
            <person name="Brinkac L.M."/>
            <person name="Dodson R.J."/>
            <person name="Rosovitz M.J."/>
            <person name="Sundaram J.P."/>
            <person name="Daugherty S.C."/>
            <person name="Davidsen T."/>
            <person name="Durkin A.S."/>
            <person name="Gwinn M.L."/>
            <person name="Haft D.H."/>
            <person name="Selengut J.D."/>
            <person name="Sullivan S.A."/>
            <person name="Zafar N."/>
            <person name="Zhou L."/>
            <person name="Benahmed F."/>
            <person name="Forberger H."/>
            <person name="Halpin R."/>
            <person name="Mulligan S."/>
            <person name="Robinson J."/>
            <person name="White O."/>
            <person name="Rikihisa Y."/>
            <person name="Tettelin H."/>
        </authorList>
    </citation>
    <scope>NUCLEOTIDE SEQUENCE [LARGE SCALE GENOMIC DNA]</scope>
    <source>
        <strain>HZ</strain>
    </source>
</reference>